<keyword id="KW-0238">DNA-binding</keyword>
<keyword id="KW-0408">Iron</keyword>
<keyword id="KW-0411">Iron-sulfur</keyword>
<keyword id="KW-0479">Metal-binding</keyword>
<keyword id="KW-1185">Reference proteome</keyword>
<keyword id="KW-0678">Repressor</keyword>
<keyword id="KW-0804">Transcription</keyword>
<keyword id="KW-0805">Transcription regulation</keyword>
<reference key="1">
    <citation type="journal article" date="2001" name="Nature">
        <title>Complete genome sequence of Salmonella enterica serovar Typhimurium LT2.</title>
        <authorList>
            <person name="McClelland M."/>
            <person name="Sanderson K.E."/>
            <person name="Spieth J."/>
            <person name="Clifton S.W."/>
            <person name="Latreille P."/>
            <person name="Courtney L."/>
            <person name="Porwollik S."/>
            <person name="Ali J."/>
            <person name="Dante M."/>
            <person name="Du F."/>
            <person name="Hou S."/>
            <person name="Layman D."/>
            <person name="Leonard S."/>
            <person name="Nguyen C."/>
            <person name="Scott K."/>
            <person name="Holmes A."/>
            <person name="Grewal N."/>
            <person name="Mulvaney E."/>
            <person name="Ryan E."/>
            <person name="Sun H."/>
            <person name="Florea L."/>
            <person name="Miller W."/>
            <person name="Stoneking T."/>
            <person name="Nhan M."/>
            <person name="Waterston R."/>
            <person name="Wilson R.K."/>
        </authorList>
    </citation>
    <scope>NUCLEOTIDE SEQUENCE [LARGE SCALE GENOMIC DNA]</scope>
    <source>
        <strain>LT2 / SGSC1412 / ATCC 700720</strain>
    </source>
</reference>
<protein>
    <recommendedName>
        <fullName evidence="1">Probable [Fe-S]-dependent transcriptional repressor</fullName>
    </recommendedName>
</protein>
<accession>Q7CPK5</accession>
<organism>
    <name type="scientific">Salmonella typhimurium (strain LT2 / SGSC1412 / ATCC 700720)</name>
    <dbReference type="NCBI Taxonomy" id="99287"/>
    <lineage>
        <taxon>Bacteria</taxon>
        <taxon>Pseudomonadati</taxon>
        <taxon>Pseudomonadota</taxon>
        <taxon>Gammaproteobacteria</taxon>
        <taxon>Enterobacterales</taxon>
        <taxon>Enterobacteriaceae</taxon>
        <taxon>Salmonella</taxon>
    </lineage>
</organism>
<comment type="function">
    <text evidence="1">May function as a transcriptional regulator that controls feoABC expression.</text>
</comment>
<comment type="similarity">
    <text evidence="1">Belongs to the FeoC family.</text>
</comment>
<gene>
    <name evidence="1" type="primary">feoC</name>
    <name type="ordered locus">STM3507</name>
</gene>
<feature type="chain" id="PRO_0000313066" description="Probable [Fe-S]-dependent transcriptional repressor">
    <location>
        <begin position="1"/>
        <end position="78"/>
    </location>
</feature>
<feature type="binding site" evidence="1">
    <location>
        <position position="56"/>
    </location>
    <ligand>
        <name>iron-sulfur cluster</name>
        <dbReference type="ChEBI" id="CHEBI:30408"/>
    </ligand>
</feature>
<feature type="binding site" evidence="1">
    <location>
        <position position="61"/>
    </location>
    <ligand>
        <name>iron-sulfur cluster</name>
        <dbReference type="ChEBI" id="CHEBI:30408"/>
    </ligand>
</feature>
<feature type="binding site" evidence="1">
    <location>
        <position position="64"/>
    </location>
    <ligand>
        <name>iron-sulfur cluster</name>
        <dbReference type="ChEBI" id="CHEBI:30408"/>
    </ligand>
</feature>
<feature type="binding site" evidence="1">
    <location>
        <position position="70"/>
    </location>
    <ligand>
        <name>iron-sulfur cluster</name>
        <dbReference type="ChEBI" id="CHEBI:30408"/>
    </ligand>
</feature>
<name>FEOC_SALTY</name>
<proteinExistence type="inferred from homology"/>
<sequence length="78" mass="8674">MASLIQVRDLLALRGRMEATQISHTLHAPQPMIDAMLNQLEIMGKAVRIPEEPDGCLSGSCKSCPEGKACLREWWALR</sequence>
<evidence type="ECO:0000255" key="1">
    <source>
        <dbReference type="HAMAP-Rule" id="MF_01586"/>
    </source>
</evidence>
<dbReference type="EMBL" id="AE006468">
    <property type="protein sequence ID" value="AAL22369.1"/>
    <property type="molecule type" value="Genomic_DNA"/>
</dbReference>
<dbReference type="RefSeq" id="WP_000157589.1">
    <property type="nucleotide sequence ID" value="NC_003197.2"/>
</dbReference>
<dbReference type="SMR" id="Q7CPK5"/>
<dbReference type="STRING" id="99287.STM3507"/>
<dbReference type="PaxDb" id="99287-STM3507"/>
<dbReference type="KEGG" id="stm:STM3507"/>
<dbReference type="PATRIC" id="fig|99287.12.peg.3706"/>
<dbReference type="HOGENOM" id="CLU_189182_0_0_6"/>
<dbReference type="OMA" id="HTPQPMI"/>
<dbReference type="PhylomeDB" id="Q7CPK5"/>
<dbReference type="BioCyc" id="SENT99287:STM3507-MONOMER"/>
<dbReference type="Proteomes" id="UP000001014">
    <property type="component" value="Chromosome"/>
</dbReference>
<dbReference type="GO" id="GO:0003677">
    <property type="term" value="F:DNA binding"/>
    <property type="evidence" value="ECO:0007669"/>
    <property type="project" value="UniProtKB-KW"/>
</dbReference>
<dbReference type="GO" id="GO:0005506">
    <property type="term" value="F:iron ion binding"/>
    <property type="evidence" value="ECO:0007669"/>
    <property type="project" value="UniProtKB-UniRule"/>
</dbReference>
<dbReference type="GO" id="GO:0051536">
    <property type="term" value="F:iron-sulfur cluster binding"/>
    <property type="evidence" value="ECO:0007669"/>
    <property type="project" value="UniProtKB-KW"/>
</dbReference>
<dbReference type="Gene3D" id="1.10.10.10">
    <property type="entry name" value="Winged helix-like DNA-binding domain superfamily/Winged helix DNA-binding domain"/>
    <property type="match status" value="1"/>
</dbReference>
<dbReference type="HAMAP" id="MF_01586">
    <property type="entry name" value="FeoC"/>
    <property type="match status" value="1"/>
</dbReference>
<dbReference type="InterPro" id="IPR023732">
    <property type="entry name" value="FeoC"/>
</dbReference>
<dbReference type="InterPro" id="IPR015102">
    <property type="entry name" value="Tscrpt_reg_HTH_FeoC"/>
</dbReference>
<dbReference type="InterPro" id="IPR036388">
    <property type="entry name" value="WH-like_DNA-bd_sf"/>
</dbReference>
<dbReference type="InterPro" id="IPR036390">
    <property type="entry name" value="WH_DNA-bd_sf"/>
</dbReference>
<dbReference type="NCBIfam" id="NF011960">
    <property type="entry name" value="PRK15431.1"/>
    <property type="match status" value="1"/>
</dbReference>
<dbReference type="Pfam" id="PF09012">
    <property type="entry name" value="FeoC"/>
    <property type="match status" value="1"/>
</dbReference>
<dbReference type="SUPFAM" id="SSF46785">
    <property type="entry name" value="Winged helix' DNA-binding domain"/>
    <property type="match status" value="1"/>
</dbReference>